<reference key="1">
    <citation type="journal article" date="1995" name="Science">
        <title>Whole-genome random sequencing and assembly of Haemophilus influenzae Rd.</title>
        <authorList>
            <person name="Fleischmann R.D."/>
            <person name="Adams M.D."/>
            <person name="White O."/>
            <person name="Clayton R.A."/>
            <person name="Kirkness E.F."/>
            <person name="Kerlavage A.R."/>
            <person name="Bult C.J."/>
            <person name="Tomb J.-F."/>
            <person name="Dougherty B.A."/>
            <person name="Merrick J.M."/>
            <person name="McKenney K."/>
            <person name="Sutton G.G."/>
            <person name="FitzHugh W."/>
            <person name="Fields C.A."/>
            <person name="Gocayne J.D."/>
            <person name="Scott J.D."/>
            <person name="Shirley R."/>
            <person name="Liu L.-I."/>
            <person name="Glodek A."/>
            <person name="Kelley J.M."/>
            <person name="Weidman J.F."/>
            <person name="Phillips C.A."/>
            <person name="Spriggs T."/>
            <person name="Hedblom E."/>
            <person name="Cotton M.D."/>
            <person name="Utterback T.R."/>
            <person name="Hanna M.C."/>
            <person name="Nguyen D.T."/>
            <person name="Saudek D.M."/>
            <person name="Brandon R.C."/>
            <person name="Fine L.D."/>
            <person name="Fritchman J.L."/>
            <person name="Fuhrmann J.L."/>
            <person name="Geoghagen N.S.M."/>
            <person name="Gnehm C.L."/>
            <person name="McDonald L.A."/>
            <person name="Small K.V."/>
            <person name="Fraser C.M."/>
            <person name="Smith H.O."/>
            <person name="Venter J.C."/>
        </authorList>
    </citation>
    <scope>NUCLEOTIDE SEQUENCE [LARGE SCALE GENOMIC DNA]</scope>
    <source>
        <strain>ATCC 51907 / DSM 11121 / KW20 / Rd</strain>
    </source>
</reference>
<organism>
    <name type="scientific">Haemophilus influenzae (strain ATCC 51907 / DSM 11121 / KW20 / Rd)</name>
    <dbReference type="NCBI Taxonomy" id="71421"/>
    <lineage>
        <taxon>Bacteria</taxon>
        <taxon>Pseudomonadati</taxon>
        <taxon>Pseudomonadota</taxon>
        <taxon>Gammaproteobacteria</taxon>
        <taxon>Pasteurellales</taxon>
        <taxon>Pasteurellaceae</taxon>
        <taxon>Haemophilus</taxon>
    </lineage>
</organism>
<feature type="chain" id="PRO_0000159038" description="Sulfur carrier protein TusA">
    <location>
        <begin position="1"/>
        <end position="79"/>
    </location>
</feature>
<feature type="active site" description="Cysteine persulfide intermediate" evidence="1">
    <location>
        <position position="17"/>
    </location>
</feature>
<protein>
    <recommendedName>
        <fullName evidence="1">Sulfur carrier protein TusA</fullName>
    </recommendedName>
</protein>
<dbReference type="EMBL" id="L42023">
    <property type="protein sequence ID" value="AAC22379.1"/>
    <property type="status" value="ALT_INIT"/>
    <property type="molecule type" value="Genomic_DNA"/>
</dbReference>
<dbReference type="PIR" id="D64157">
    <property type="entry name" value="D64157"/>
</dbReference>
<dbReference type="RefSeq" id="NP_438879.2">
    <property type="nucleotide sequence ID" value="NC_000907.1"/>
</dbReference>
<dbReference type="SMR" id="P44841"/>
<dbReference type="STRING" id="71421.HI_0721"/>
<dbReference type="EnsemblBacteria" id="AAC22379">
    <property type="protein sequence ID" value="AAC22379"/>
    <property type="gene ID" value="HI_0721"/>
</dbReference>
<dbReference type="KEGG" id="hin:HI_0721"/>
<dbReference type="PATRIC" id="fig|71421.8.peg.753"/>
<dbReference type="eggNOG" id="COG0425">
    <property type="taxonomic scope" value="Bacteria"/>
</dbReference>
<dbReference type="HOGENOM" id="CLU_165255_5_0_6"/>
<dbReference type="OrthoDB" id="9797352at2"/>
<dbReference type="PhylomeDB" id="P44841"/>
<dbReference type="BioCyc" id="HINF71421:G1GJ1-755-MONOMER"/>
<dbReference type="Proteomes" id="UP000000579">
    <property type="component" value="Chromosome"/>
</dbReference>
<dbReference type="GO" id="GO:0005737">
    <property type="term" value="C:cytoplasm"/>
    <property type="evidence" value="ECO:0007669"/>
    <property type="project" value="UniProtKB-SubCell"/>
</dbReference>
<dbReference type="GO" id="GO:0097163">
    <property type="term" value="F:sulfur carrier activity"/>
    <property type="evidence" value="ECO:0007669"/>
    <property type="project" value="UniProtKB-UniRule"/>
</dbReference>
<dbReference type="GO" id="GO:0002143">
    <property type="term" value="P:tRNA wobble position uridine thiolation"/>
    <property type="evidence" value="ECO:0007669"/>
    <property type="project" value="InterPro"/>
</dbReference>
<dbReference type="Gene3D" id="3.30.110.40">
    <property type="entry name" value="TusA-like domain"/>
    <property type="match status" value="1"/>
</dbReference>
<dbReference type="HAMAP" id="MF_00413">
    <property type="entry name" value="Thiourid_synth_A"/>
    <property type="match status" value="1"/>
</dbReference>
<dbReference type="InterPro" id="IPR022931">
    <property type="entry name" value="Sulphur_carrier_TusA"/>
</dbReference>
<dbReference type="InterPro" id="IPR001455">
    <property type="entry name" value="TusA-like"/>
</dbReference>
<dbReference type="InterPro" id="IPR036868">
    <property type="entry name" value="TusA-like_sf"/>
</dbReference>
<dbReference type="NCBIfam" id="NF001423">
    <property type="entry name" value="PRK00299.1"/>
    <property type="match status" value="1"/>
</dbReference>
<dbReference type="PANTHER" id="PTHR33279:SF2">
    <property type="entry name" value="SULFUR CARRIER PROTEIN TUSA"/>
    <property type="match status" value="1"/>
</dbReference>
<dbReference type="PANTHER" id="PTHR33279">
    <property type="entry name" value="SULFUR CARRIER PROTEIN YEDF-RELATED"/>
    <property type="match status" value="1"/>
</dbReference>
<dbReference type="Pfam" id="PF01206">
    <property type="entry name" value="TusA"/>
    <property type="match status" value="1"/>
</dbReference>
<dbReference type="SUPFAM" id="SSF64307">
    <property type="entry name" value="SirA-like"/>
    <property type="match status" value="1"/>
</dbReference>
<dbReference type="PROSITE" id="PS01148">
    <property type="entry name" value="UPF0033"/>
    <property type="match status" value="1"/>
</dbReference>
<gene>
    <name evidence="1" type="primary">tusA</name>
    <name type="ordered locus">HI_0721</name>
</gene>
<evidence type="ECO:0000255" key="1">
    <source>
        <dbReference type="HAMAP-Rule" id="MF_00413"/>
    </source>
</evidence>
<evidence type="ECO:0000305" key="2"/>
<sequence length="79" mass="9114">MSEISVTQTLDTLGLRCPEPVMLVRKNIRHLNDGEILLIIADDPATTRDIPSFCQFMDHTLLQCEVEKPPFKYWVKRGK</sequence>
<proteinExistence type="inferred from homology"/>
<keyword id="KW-0963">Cytoplasm</keyword>
<keyword id="KW-1185">Reference proteome</keyword>
<comment type="function">
    <text evidence="1">Sulfur carrier protein which probably makes part of a sulfur-relay system.</text>
</comment>
<comment type="subcellular location">
    <subcellularLocation>
        <location evidence="1">Cytoplasm</location>
    </subcellularLocation>
</comment>
<comment type="similarity">
    <text evidence="1">Belongs to the sulfur carrier protein TusA family.</text>
</comment>
<comment type="sequence caution" evidence="2">
    <conflict type="erroneous initiation">
        <sequence resource="EMBL-CDS" id="AAC22379"/>
    </conflict>
</comment>
<accession>P44841</accession>
<name>TUSA_HAEIN</name>